<evidence type="ECO:0000255" key="1">
    <source>
        <dbReference type="HAMAP-Rule" id="MF_00199"/>
    </source>
</evidence>
<evidence type="ECO:0000256" key="2">
    <source>
        <dbReference type="SAM" id="MobiDB-lite"/>
    </source>
</evidence>
<gene>
    <name evidence="1" type="primary">apaH</name>
    <name type="ordered locus">PXO_04647</name>
</gene>
<sequence length="318" mass="35422">MSVWAIGDLQGCYDITQRLLEKINFDPAQDTLWFCGDLVNRGGQSLETLRLVHSLRAHSVVVLGNHDLSLLAIGARSEEEQRKVNPDLLRIVLAEDRDALLDWLRMQKLAHVDRALGWMMIHAGLAPKWTTQMAEKHAREVEQQLQGGGYRKLLRNMYGDQPGWSPGLIGYDRSRAIINLFTRMRYCTPRGRIATDDKGTPGTQAQGLYPWFEVPGRVERDLKIVCGHWSALGLTITQGVHAIDTGAVWGGKLTALQLDTDELRVVQVPGREVTGPAPVARAPRRPRERLGRQRSRGNRGNAGNTAVPAKPPVDTPQD</sequence>
<keyword id="KW-0378">Hydrolase</keyword>
<feature type="chain" id="PRO_1000099340" description="Bis(5'-nucleosyl)-tetraphosphatase, symmetrical">
    <location>
        <begin position="1"/>
        <end position="318"/>
    </location>
</feature>
<feature type="region of interest" description="Disordered" evidence="2">
    <location>
        <begin position="269"/>
        <end position="318"/>
    </location>
</feature>
<feature type="compositionally biased region" description="Basic residues" evidence="2">
    <location>
        <begin position="282"/>
        <end position="297"/>
    </location>
</feature>
<feature type="compositionally biased region" description="Pro residues" evidence="2">
    <location>
        <begin position="309"/>
        <end position="318"/>
    </location>
</feature>
<organism>
    <name type="scientific">Xanthomonas oryzae pv. oryzae (strain PXO99A)</name>
    <dbReference type="NCBI Taxonomy" id="360094"/>
    <lineage>
        <taxon>Bacteria</taxon>
        <taxon>Pseudomonadati</taxon>
        <taxon>Pseudomonadota</taxon>
        <taxon>Gammaproteobacteria</taxon>
        <taxon>Lysobacterales</taxon>
        <taxon>Lysobacteraceae</taxon>
        <taxon>Xanthomonas</taxon>
    </lineage>
</organism>
<comment type="function">
    <text evidence="1">Hydrolyzes diadenosine 5',5'''-P1,P4-tetraphosphate to yield ADP.</text>
</comment>
<comment type="catalytic activity">
    <reaction evidence="1">
        <text>P(1),P(4)-bis(5'-adenosyl) tetraphosphate + H2O = 2 ADP + 2 H(+)</text>
        <dbReference type="Rhea" id="RHEA:24252"/>
        <dbReference type="ChEBI" id="CHEBI:15377"/>
        <dbReference type="ChEBI" id="CHEBI:15378"/>
        <dbReference type="ChEBI" id="CHEBI:58141"/>
        <dbReference type="ChEBI" id="CHEBI:456216"/>
        <dbReference type="EC" id="3.6.1.41"/>
    </reaction>
</comment>
<comment type="similarity">
    <text evidence="1">Belongs to the Ap4A hydrolase family.</text>
</comment>
<name>APAH_XANOP</name>
<dbReference type="EC" id="3.6.1.41" evidence="1"/>
<dbReference type="EMBL" id="CP000967">
    <property type="protein sequence ID" value="ACD57768.1"/>
    <property type="molecule type" value="Genomic_DNA"/>
</dbReference>
<dbReference type="RefSeq" id="WP_012444234.1">
    <property type="nucleotide sequence ID" value="NC_010717.2"/>
</dbReference>
<dbReference type="SMR" id="B2SPT1"/>
<dbReference type="KEGG" id="xop:PXO_04647"/>
<dbReference type="eggNOG" id="COG0639">
    <property type="taxonomic scope" value="Bacteria"/>
</dbReference>
<dbReference type="HOGENOM" id="CLU_056184_0_0_6"/>
<dbReference type="Proteomes" id="UP000001740">
    <property type="component" value="Chromosome"/>
</dbReference>
<dbReference type="GO" id="GO:0008803">
    <property type="term" value="F:bis(5'-nucleosyl)-tetraphosphatase (symmetrical) activity"/>
    <property type="evidence" value="ECO:0007669"/>
    <property type="project" value="UniProtKB-UniRule"/>
</dbReference>
<dbReference type="CDD" id="cd07422">
    <property type="entry name" value="MPP_ApaH"/>
    <property type="match status" value="1"/>
</dbReference>
<dbReference type="Gene3D" id="3.60.21.10">
    <property type="match status" value="1"/>
</dbReference>
<dbReference type="HAMAP" id="MF_00199">
    <property type="entry name" value="ApaH"/>
    <property type="match status" value="1"/>
</dbReference>
<dbReference type="InterPro" id="IPR004617">
    <property type="entry name" value="ApaH"/>
</dbReference>
<dbReference type="InterPro" id="IPR004843">
    <property type="entry name" value="Calcineurin-like_PHP_ApaH"/>
</dbReference>
<dbReference type="InterPro" id="IPR029052">
    <property type="entry name" value="Metallo-depent_PP-like"/>
</dbReference>
<dbReference type="InterPro" id="IPR006186">
    <property type="entry name" value="Ser/Thr-sp_prot-phosphatase"/>
</dbReference>
<dbReference type="NCBIfam" id="TIGR00668">
    <property type="entry name" value="apaH"/>
    <property type="match status" value="1"/>
</dbReference>
<dbReference type="NCBIfam" id="NF001204">
    <property type="entry name" value="PRK00166.1"/>
    <property type="match status" value="1"/>
</dbReference>
<dbReference type="PANTHER" id="PTHR40942">
    <property type="match status" value="1"/>
</dbReference>
<dbReference type="PANTHER" id="PTHR40942:SF4">
    <property type="entry name" value="CYTOCHROME C5"/>
    <property type="match status" value="1"/>
</dbReference>
<dbReference type="Pfam" id="PF00149">
    <property type="entry name" value="Metallophos"/>
    <property type="match status" value="1"/>
</dbReference>
<dbReference type="PIRSF" id="PIRSF000903">
    <property type="entry name" value="B5n-ttraPtase_sm"/>
    <property type="match status" value="1"/>
</dbReference>
<dbReference type="PRINTS" id="PR00114">
    <property type="entry name" value="STPHPHTASE"/>
</dbReference>
<dbReference type="SUPFAM" id="SSF56300">
    <property type="entry name" value="Metallo-dependent phosphatases"/>
    <property type="match status" value="1"/>
</dbReference>
<accession>B2SPT1</accession>
<protein>
    <recommendedName>
        <fullName evidence="1">Bis(5'-nucleosyl)-tetraphosphatase, symmetrical</fullName>
        <ecNumber evidence="1">3.6.1.41</ecNumber>
    </recommendedName>
    <alternativeName>
        <fullName evidence="1">Ap4A hydrolase</fullName>
    </alternativeName>
    <alternativeName>
        <fullName evidence="1">Diadenosine 5',5'''-P1,P4-tetraphosphate pyrophosphohydrolase</fullName>
    </alternativeName>
    <alternativeName>
        <fullName evidence="1">Diadenosine tetraphosphatase</fullName>
    </alternativeName>
</protein>
<reference key="1">
    <citation type="journal article" date="2008" name="BMC Genomics">
        <title>Genome sequence and rapid evolution of the rice pathogen Xanthomonas oryzae pv. oryzae PXO99A.</title>
        <authorList>
            <person name="Salzberg S.L."/>
            <person name="Sommer D.D."/>
            <person name="Schatz M.C."/>
            <person name="Phillippy A.M."/>
            <person name="Rabinowicz P.D."/>
            <person name="Tsuge S."/>
            <person name="Furutani A."/>
            <person name="Ochiai H."/>
            <person name="Delcher A.L."/>
            <person name="Kelley D."/>
            <person name="Madupu R."/>
            <person name="Puiu D."/>
            <person name="Radune D."/>
            <person name="Shumway M."/>
            <person name="Trapnell C."/>
            <person name="Aparna G."/>
            <person name="Jha G."/>
            <person name="Pandey A."/>
            <person name="Patil P.B."/>
            <person name="Ishihara H."/>
            <person name="Meyer D.F."/>
            <person name="Szurek B."/>
            <person name="Verdier V."/>
            <person name="Koebnik R."/>
            <person name="Dow J.M."/>
            <person name="Ryan R.P."/>
            <person name="Hirata H."/>
            <person name="Tsuyumu S."/>
            <person name="Won Lee S."/>
            <person name="Seo Y.-S."/>
            <person name="Sriariyanum M."/>
            <person name="Ronald P.C."/>
            <person name="Sonti R.V."/>
            <person name="Van Sluys M.-A."/>
            <person name="Leach J.E."/>
            <person name="White F.F."/>
            <person name="Bogdanove A.J."/>
        </authorList>
    </citation>
    <scope>NUCLEOTIDE SEQUENCE [LARGE SCALE GENOMIC DNA]</scope>
    <source>
        <strain>PXO99A</strain>
    </source>
</reference>
<proteinExistence type="inferred from homology"/>